<name>HSLU_SALPB</name>
<keyword id="KW-0067">ATP-binding</keyword>
<keyword id="KW-0143">Chaperone</keyword>
<keyword id="KW-0963">Cytoplasm</keyword>
<keyword id="KW-0547">Nucleotide-binding</keyword>
<keyword id="KW-0346">Stress response</keyword>
<dbReference type="EMBL" id="CP000886">
    <property type="protein sequence ID" value="ABX70359.1"/>
    <property type="molecule type" value="Genomic_DNA"/>
</dbReference>
<dbReference type="RefSeq" id="WP_001293360.1">
    <property type="nucleotide sequence ID" value="NC_010102.1"/>
</dbReference>
<dbReference type="SMR" id="A9MZI1"/>
<dbReference type="KEGG" id="spq:SPAB_05068"/>
<dbReference type="PATRIC" id="fig|1016998.12.peg.4757"/>
<dbReference type="HOGENOM" id="CLU_033123_0_0_6"/>
<dbReference type="BioCyc" id="SENT1016998:SPAB_RS20625-MONOMER"/>
<dbReference type="Proteomes" id="UP000008556">
    <property type="component" value="Chromosome"/>
</dbReference>
<dbReference type="GO" id="GO:0009376">
    <property type="term" value="C:HslUV protease complex"/>
    <property type="evidence" value="ECO:0007669"/>
    <property type="project" value="UniProtKB-UniRule"/>
</dbReference>
<dbReference type="GO" id="GO:0005524">
    <property type="term" value="F:ATP binding"/>
    <property type="evidence" value="ECO:0007669"/>
    <property type="project" value="UniProtKB-UniRule"/>
</dbReference>
<dbReference type="GO" id="GO:0016887">
    <property type="term" value="F:ATP hydrolysis activity"/>
    <property type="evidence" value="ECO:0007669"/>
    <property type="project" value="InterPro"/>
</dbReference>
<dbReference type="GO" id="GO:0008233">
    <property type="term" value="F:peptidase activity"/>
    <property type="evidence" value="ECO:0007669"/>
    <property type="project" value="InterPro"/>
</dbReference>
<dbReference type="GO" id="GO:0036402">
    <property type="term" value="F:proteasome-activating activity"/>
    <property type="evidence" value="ECO:0007669"/>
    <property type="project" value="UniProtKB-UniRule"/>
</dbReference>
<dbReference type="GO" id="GO:0043335">
    <property type="term" value="P:protein unfolding"/>
    <property type="evidence" value="ECO:0007669"/>
    <property type="project" value="UniProtKB-UniRule"/>
</dbReference>
<dbReference type="GO" id="GO:0051603">
    <property type="term" value="P:proteolysis involved in protein catabolic process"/>
    <property type="evidence" value="ECO:0007669"/>
    <property type="project" value="TreeGrafter"/>
</dbReference>
<dbReference type="CDD" id="cd19498">
    <property type="entry name" value="RecA-like_HslU"/>
    <property type="match status" value="1"/>
</dbReference>
<dbReference type="FunFam" id="1.10.8.10:FF:000012">
    <property type="entry name" value="ATP-dependent protease ATPase subunit HslU"/>
    <property type="match status" value="1"/>
</dbReference>
<dbReference type="FunFam" id="1.10.8.10:FF:000028">
    <property type="entry name" value="ATP-dependent protease ATPase subunit HslU"/>
    <property type="match status" value="1"/>
</dbReference>
<dbReference type="FunFam" id="1.10.8.60:FF:000027">
    <property type="entry name" value="ATP-dependent protease ATPase subunit HslU"/>
    <property type="match status" value="1"/>
</dbReference>
<dbReference type="FunFam" id="3.40.50.300:FF:000213">
    <property type="entry name" value="ATP-dependent protease ATPase subunit HslU"/>
    <property type="match status" value="1"/>
</dbReference>
<dbReference type="FunFam" id="3.40.50.300:FF:000220">
    <property type="entry name" value="ATP-dependent protease ATPase subunit HslU"/>
    <property type="match status" value="1"/>
</dbReference>
<dbReference type="Gene3D" id="1.10.8.60">
    <property type="match status" value="1"/>
</dbReference>
<dbReference type="Gene3D" id="1.10.8.10">
    <property type="entry name" value="DNA helicase RuvA subunit, C-terminal domain"/>
    <property type="match status" value="2"/>
</dbReference>
<dbReference type="Gene3D" id="3.40.50.300">
    <property type="entry name" value="P-loop containing nucleotide triphosphate hydrolases"/>
    <property type="match status" value="1"/>
</dbReference>
<dbReference type="HAMAP" id="MF_00249">
    <property type="entry name" value="HslU"/>
    <property type="match status" value="1"/>
</dbReference>
<dbReference type="InterPro" id="IPR003593">
    <property type="entry name" value="AAA+_ATPase"/>
</dbReference>
<dbReference type="InterPro" id="IPR050052">
    <property type="entry name" value="ATP-dep_Clp_protease_ClpX"/>
</dbReference>
<dbReference type="InterPro" id="IPR003959">
    <property type="entry name" value="ATPase_AAA_core"/>
</dbReference>
<dbReference type="InterPro" id="IPR019489">
    <property type="entry name" value="Clp_ATPase_C"/>
</dbReference>
<dbReference type="InterPro" id="IPR004491">
    <property type="entry name" value="HslU"/>
</dbReference>
<dbReference type="InterPro" id="IPR027417">
    <property type="entry name" value="P-loop_NTPase"/>
</dbReference>
<dbReference type="NCBIfam" id="TIGR00390">
    <property type="entry name" value="hslU"/>
    <property type="match status" value="1"/>
</dbReference>
<dbReference type="NCBIfam" id="NF003544">
    <property type="entry name" value="PRK05201.1"/>
    <property type="match status" value="1"/>
</dbReference>
<dbReference type="PANTHER" id="PTHR48102">
    <property type="entry name" value="ATP-DEPENDENT CLP PROTEASE ATP-BINDING SUBUNIT CLPX-LIKE, MITOCHONDRIAL-RELATED"/>
    <property type="match status" value="1"/>
</dbReference>
<dbReference type="PANTHER" id="PTHR48102:SF3">
    <property type="entry name" value="ATP-DEPENDENT PROTEASE ATPASE SUBUNIT HSLU"/>
    <property type="match status" value="1"/>
</dbReference>
<dbReference type="Pfam" id="PF00004">
    <property type="entry name" value="AAA"/>
    <property type="match status" value="1"/>
</dbReference>
<dbReference type="Pfam" id="PF07724">
    <property type="entry name" value="AAA_2"/>
    <property type="match status" value="1"/>
</dbReference>
<dbReference type="SMART" id="SM00382">
    <property type="entry name" value="AAA"/>
    <property type="match status" value="1"/>
</dbReference>
<dbReference type="SMART" id="SM01086">
    <property type="entry name" value="ClpB_D2-small"/>
    <property type="match status" value="1"/>
</dbReference>
<dbReference type="SUPFAM" id="SSF52540">
    <property type="entry name" value="P-loop containing nucleoside triphosphate hydrolases"/>
    <property type="match status" value="1"/>
</dbReference>
<evidence type="ECO:0000255" key="1">
    <source>
        <dbReference type="HAMAP-Rule" id="MF_00249"/>
    </source>
</evidence>
<feature type="chain" id="PRO_1000078453" description="ATP-dependent protease ATPase subunit HslU">
    <location>
        <begin position="1"/>
        <end position="443"/>
    </location>
</feature>
<feature type="binding site" evidence="1">
    <location>
        <position position="18"/>
    </location>
    <ligand>
        <name>ATP</name>
        <dbReference type="ChEBI" id="CHEBI:30616"/>
    </ligand>
</feature>
<feature type="binding site" evidence="1">
    <location>
        <begin position="60"/>
        <end position="65"/>
    </location>
    <ligand>
        <name>ATP</name>
        <dbReference type="ChEBI" id="CHEBI:30616"/>
    </ligand>
</feature>
<feature type="binding site" evidence="1">
    <location>
        <position position="256"/>
    </location>
    <ligand>
        <name>ATP</name>
        <dbReference type="ChEBI" id="CHEBI:30616"/>
    </ligand>
</feature>
<feature type="binding site" evidence="1">
    <location>
        <position position="321"/>
    </location>
    <ligand>
        <name>ATP</name>
        <dbReference type="ChEBI" id="CHEBI:30616"/>
    </ligand>
</feature>
<feature type="binding site" evidence="1">
    <location>
        <position position="393"/>
    </location>
    <ligand>
        <name>ATP</name>
        <dbReference type="ChEBI" id="CHEBI:30616"/>
    </ligand>
</feature>
<comment type="function">
    <text evidence="1">ATPase subunit of a proteasome-like degradation complex; this subunit has chaperone activity. The binding of ATP and its subsequent hydrolysis by HslU are essential for unfolding of protein substrates subsequently hydrolyzed by HslV. HslU recognizes the N-terminal part of its protein substrates and unfolds these before they are guided to HslV for hydrolysis.</text>
</comment>
<comment type="subunit">
    <text evidence="1">A double ring-shaped homohexamer of HslV is capped on each side by a ring-shaped HslU homohexamer. The assembly of the HslU/HslV complex is dependent on binding of ATP.</text>
</comment>
<comment type="subcellular location">
    <subcellularLocation>
        <location evidence="1">Cytoplasm</location>
    </subcellularLocation>
</comment>
<comment type="induction">
    <text evidence="1">By heat shock.</text>
</comment>
<comment type="similarity">
    <text evidence="1">Belongs to the ClpX chaperone family. HslU subfamily.</text>
</comment>
<reference key="1">
    <citation type="submission" date="2007-11" db="EMBL/GenBank/DDBJ databases">
        <authorList>
            <consortium name="The Salmonella enterica serovar Paratyphi B Genome Sequencing Project"/>
            <person name="McClelland M."/>
            <person name="Sanderson E.K."/>
            <person name="Porwollik S."/>
            <person name="Spieth J."/>
            <person name="Clifton W.S."/>
            <person name="Fulton R."/>
            <person name="Cordes M."/>
            <person name="Wollam A."/>
            <person name="Shah N."/>
            <person name="Pepin K."/>
            <person name="Bhonagiri V."/>
            <person name="Nash W."/>
            <person name="Johnson M."/>
            <person name="Thiruvilangam P."/>
            <person name="Wilson R."/>
        </authorList>
    </citation>
    <scope>NUCLEOTIDE SEQUENCE [LARGE SCALE GENOMIC DNA]</scope>
    <source>
        <strain>ATCC BAA-1250 / SPB7</strain>
    </source>
</reference>
<accession>A9MZI1</accession>
<sequence length="443" mass="49668">MSEMTPREIVSELNKHIIGQDNAKRSVAIALRNRWRRMQLDEELRHEVTPKNILMIGPTGVGKTEIARRLAKLANAPFIKVEATKFTEVGYVGKEVDSIIRDLTDAAVKMVRVQAIEKNRYRAEELAEERILDVLIPPAKNNWGQAEQQQEPSAARQTFRKKLREGQLDDKEIEINLAAAPMGVEIMAPPGMEEMTSQLQSMFQNLGGQKQKPRKLKIKDAMKLLVEEEAAKLVNPEELKQDAIDAVEQHGIVFIDEIDKICKRGETSGPDVSREGVQRDLLPLVEGCTVSTKHGMVKTDHILFIASGAFQVAKPSDLIPELQGRLPIRVELQALTTSDFERILTEPNASVTVQYKALMATEGVNIEFTDSGIKRIAEAAWQVNETTENIGARRLHTVLERLMEEISYNASDLHGQNITIDAEYVSKHLDALVADEDLSRFIL</sequence>
<organism>
    <name type="scientific">Salmonella paratyphi B (strain ATCC BAA-1250 / SPB7)</name>
    <dbReference type="NCBI Taxonomy" id="1016998"/>
    <lineage>
        <taxon>Bacteria</taxon>
        <taxon>Pseudomonadati</taxon>
        <taxon>Pseudomonadota</taxon>
        <taxon>Gammaproteobacteria</taxon>
        <taxon>Enterobacterales</taxon>
        <taxon>Enterobacteriaceae</taxon>
        <taxon>Salmonella</taxon>
    </lineage>
</organism>
<proteinExistence type="inferred from homology"/>
<gene>
    <name evidence="1" type="primary">hslU</name>
    <name type="ordered locus">SPAB_05068</name>
</gene>
<protein>
    <recommendedName>
        <fullName evidence="1">ATP-dependent protease ATPase subunit HslU</fullName>
    </recommendedName>
    <alternativeName>
        <fullName evidence="1">Heat shock protein HslU</fullName>
    </alternativeName>
    <alternativeName>
        <fullName evidence="1">Unfoldase HslU</fullName>
    </alternativeName>
</protein>